<protein>
    <recommendedName>
        <fullName>CRS2-associated factor 2, chloroplastic</fullName>
    </recommendedName>
    <alternativeName>
        <fullName>Chloroplastic group IIA intron splicing facilitator CRS2-associated factor 2</fullName>
    </alternativeName>
</protein>
<reference key="1">
    <citation type="journal article" date="2002" name="Nature">
        <title>The genome sequence and structure of rice chromosome 1.</title>
        <authorList>
            <person name="Sasaki T."/>
            <person name="Matsumoto T."/>
            <person name="Yamamoto K."/>
            <person name="Sakata K."/>
            <person name="Baba T."/>
            <person name="Katayose Y."/>
            <person name="Wu J."/>
            <person name="Niimura Y."/>
            <person name="Cheng Z."/>
            <person name="Nagamura Y."/>
            <person name="Antonio B.A."/>
            <person name="Kanamori H."/>
            <person name="Hosokawa S."/>
            <person name="Masukawa M."/>
            <person name="Arikawa K."/>
            <person name="Chiden Y."/>
            <person name="Hayashi M."/>
            <person name="Okamoto M."/>
            <person name="Ando T."/>
            <person name="Aoki H."/>
            <person name="Arita K."/>
            <person name="Hamada M."/>
            <person name="Harada C."/>
            <person name="Hijishita S."/>
            <person name="Honda M."/>
            <person name="Ichikawa Y."/>
            <person name="Idonuma A."/>
            <person name="Iijima M."/>
            <person name="Ikeda M."/>
            <person name="Ikeno M."/>
            <person name="Ito S."/>
            <person name="Ito T."/>
            <person name="Ito Y."/>
            <person name="Ito Y."/>
            <person name="Iwabuchi A."/>
            <person name="Kamiya K."/>
            <person name="Karasawa W."/>
            <person name="Katagiri S."/>
            <person name="Kikuta A."/>
            <person name="Kobayashi N."/>
            <person name="Kono I."/>
            <person name="Machita K."/>
            <person name="Maehara T."/>
            <person name="Mizuno H."/>
            <person name="Mizubayashi T."/>
            <person name="Mukai Y."/>
            <person name="Nagasaki H."/>
            <person name="Nakashima M."/>
            <person name="Nakama Y."/>
            <person name="Nakamichi Y."/>
            <person name="Nakamura M."/>
            <person name="Namiki N."/>
            <person name="Negishi M."/>
            <person name="Ohta I."/>
            <person name="Ono N."/>
            <person name="Saji S."/>
            <person name="Sakai K."/>
            <person name="Shibata M."/>
            <person name="Shimokawa T."/>
            <person name="Shomura A."/>
            <person name="Song J."/>
            <person name="Takazaki Y."/>
            <person name="Terasawa K."/>
            <person name="Tsuji K."/>
            <person name="Waki K."/>
            <person name="Yamagata H."/>
            <person name="Yamane H."/>
            <person name="Yoshiki S."/>
            <person name="Yoshihara R."/>
            <person name="Yukawa K."/>
            <person name="Zhong H."/>
            <person name="Iwama H."/>
            <person name="Endo T."/>
            <person name="Ito H."/>
            <person name="Hahn J.H."/>
            <person name="Kim H.-I."/>
            <person name="Eun M.-Y."/>
            <person name="Yano M."/>
            <person name="Jiang J."/>
            <person name="Gojobori T."/>
        </authorList>
    </citation>
    <scope>NUCLEOTIDE SEQUENCE [LARGE SCALE GENOMIC DNA]</scope>
    <source>
        <strain>cv. Nipponbare</strain>
    </source>
</reference>
<reference key="2">
    <citation type="journal article" date="2005" name="Nature">
        <title>The map-based sequence of the rice genome.</title>
        <authorList>
            <consortium name="International rice genome sequencing project (IRGSP)"/>
        </authorList>
    </citation>
    <scope>NUCLEOTIDE SEQUENCE [LARGE SCALE GENOMIC DNA]</scope>
    <source>
        <strain>cv. Nipponbare</strain>
    </source>
</reference>
<reference key="3">
    <citation type="journal article" date="2008" name="Nucleic Acids Res.">
        <title>The rice annotation project database (RAP-DB): 2008 update.</title>
        <authorList>
            <consortium name="The rice annotation project (RAP)"/>
        </authorList>
    </citation>
    <scope>GENOME REANNOTATION</scope>
    <source>
        <strain>cv. Nipponbare</strain>
    </source>
</reference>
<reference key="4">
    <citation type="journal article" date="2013" name="Rice">
        <title>Improvement of the Oryza sativa Nipponbare reference genome using next generation sequence and optical map data.</title>
        <authorList>
            <person name="Kawahara Y."/>
            <person name="de la Bastide M."/>
            <person name="Hamilton J.P."/>
            <person name="Kanamori H."/>
            <person name="McCombie W.R."/>
            <person name="Ouyang S."/>
            <person name="Schwartz D.C."/>
            <person name="Tanaka T."/>
            <person name="Wu J."/>
            <person name="Zhou S."/>
            <person name="Childs K.L."/>
            <person name="Davidson R.M."/>
            <person name="Lin H."/>
            <person name="Quesada-Ocampo L."/>
            <person name="Vaillancourt B."/>
            <person name="Sakai H."/>
            <person name="Lee S.S."/>
            <person name="Kim J."/>
            <person name="Numa H."/>
            <person name="Itoh T."/>
            <person name="Buell C.R."/>
            <person name="Matsumoto T."/>
        </authorList>
    </citation>
    <scope>GENOME REANNOTATION</scope>
    <source>
        <strain>cv. Nipponbare</strain>
    </source>
</reference>
<accession>Q657G7</accession>
<accession>A0A0P0V224</accession>
<organism>
    <name type="scientific">Oryza sativa subsp. japonica</name>
    <name type="common">Rice</name>
    <dbReference type="NCBI Taxonomy" id="39947"/>
    <lineage>
        <taxon>Eukaryota</taxon>
        <taxon>Viridiplantae</taxon>
        <taxon>Streptophyta</taxon>
        <taxon>Embryophyta</taxon>
        <taxon>Tracheophyta</taxon>
        <taxon>Spermatophyta</taxon>
        <taxon>Magnoliopsida</taxon>
        <taxon>Liliopsida</taxon>
        <taxon>Poales</taxon>
        <taxon>Poaceae</taxon>
        <taxon>BOP clade</taxon>
        <taxon>Oryzoideae</taxon>
        <taxon>Oryzeae</taxon>
        <taxon>Oryzinae</taxon>
        <taxon>Oryza</taxon>
        <taxon>Oryza sativa</taxon>
    </lineage>
</organism>
<name>CAF2P_ORYSJ</name>
<evidence type="ECO:0000250" key="1"/>
<evidence type="ECO:0000255" key="2"/>
<evidence type="ECO:0000255" key="3">
    <source>
        <dbReference type="PROSITE-ProRule" id="PRU00626"/>
    </source>
</evidence>
<evidence type="ECO:0000256" key="4">
    <source>
        <dbReference type="SAM" id="MobiDB-lite"/>
    </source>
</evidence>
<keyword id="KW-0150">Chloroplast</keyword>
<keyword id="KW-0507">mRNA processing</keyword>
<keyword id="KW-0508">mRNA splicing</keyword>
<keyword id="KW-0934">Plastid</keyword>
<keyword id="KW-1185">Reference proteome</keyword>
<keyword id="KW-0677">Repeat</keyword>
<keyword id="KW-0687">Ribonucleoprotein</keyword>
<keyword id="KW-0694">RNA-binding</keyword>
<keyword id="KW-0809">Transit peptide</keyword>
<dbReference type="EMBL" id="AP002953">
    <property type="protein sequence ID" value="BAD44991.1"/>
    <property type="molecule type" value="Genomic_DNA"/>
</dbReference>
<dbReference type="EMBL" id="AP003211">
    <property type="protein sequence ID" value="BAD45045.1"/>
    <property type="molecule type" value="Genomic_DNA"/>
</dbReference>
<dbReference type="EMBL" id="AP008207">
    <property type="protein sequence ID" value="BAF04810.1"/>
    <property type="molecule type" value="Genomic_DNA"/>
</dbReference>
<dbReference type="EMBL" id="AP014957">
    <property type="protein sequence ID" value="BAS71859.1"/>
    <property type="molecule type" value="Genomic_DNA"/>
</dbReference>
<dbReference type="RefSeq" id="XP_015622825.1">
    <property type="nucleotide sequence ID" value="XM_015767339.1"/>
</dbReference>
<dbReference type="SMR" id="Q657G7"/>
<dbReference type="FunCoup" id="Q657G7">
    <property type="interactions" value="2656"/>
</dbReference>
<dbReference type="STRING" id="39947.Q657G7"/>
<dbReference type="PaxDb" id="39947-Q657G7"/>
<dbReference type="EnsemblPlants" id="Os01t0323300-01">
    <property type="protein sequence ID" value="Os01t0323300-01"/>
    <property type="gene ID" value="Os01g0323300"/>
</dbReference>
<dbReference type="Gramene" id="Os01t0323300-01">
    <property type="protein sequence ID" value="Os01t0323300-01"/>
    <property type="gene ID" value="Os01g0323300"/>
</dbReference>
<dbReference type="KEGG" id="dosa:Os01g0323300"/>
<dbReference type="eggNOG" id="ENOG502QW9P">
    <property type="taxonomic scope" value="Eukaryota"/>
</dbReference>
<dbReference type="HOGENOM" id="CLU_012688_1_0_1"/>
<dbReference type="InParanoid" id="Q657G7"/>
<dbReference type="OMA" id="HVEMPGP"/>
<dbReference type="OrthoDB" id="2021019at2759"/>
<dbReference type="Proteomes" id="UP000000763">
    <property type="component" value="Chromosome 1"/>
</dbReference>
<dbReference type="Proteomes" id="UP000059680">
    <property type="component" value="Chromosome 1"/>
</dbReference>
<dbReference type="GO" id="GO:0009570">
    <property type="term" value="C:chloroplast stroma"/>
    <property type="evidence" value="ECO:0007669"/>
    <property type="project" value="UniProtKB-SubCell"/>
</dbReference>
<dbReference type="GO" id="GO:1990904">
    <property type="term" value="C:ribonucleoprotein complex"/>
    <property type="evidence" value="ECO:0007669"/>
    <property type="project" value="UniProtKB-KW"/>
</dbReference>
<dbReference type="GO" id="GO:0003723">
    <property type="term" value="F:RNA binding"/>
    <property type="evidence" value="ECO:0007669"/>
    <property type="project" value="UniProtKB-KW"/>
</dbReference>
<dbReference type="GO" id="GO:0000373">
    <property type="term" value="P:Group II intron splicing"/>
    <property type="evidence" value="ECO:0007669"/>
    <property type="project" value="InterPro"/>
</dbReference>
<dbReference type="GO" id="GO:0006397">
    <property type="term" value="P:mRNA processing"/>
    <property type="evidence" value="ECO:0007669"/>
    <property type="project" value="UniProtKB-KW"/>
</dbReference>
<dbReference type="FunFam" id="3.30.110.60:FF:000002">
    <property type="entry name" value="CRS2-associated factor 1, chloroplastic"/>
    <property type="match status" value="2"/>
</dbReference>
<dbReference type="Gene3D" id="3.30.110.60">
    <property type="entry name" value="YhbY-like"/>
    <property type="match status" value="2"/>
</dbReference>
<dbReference type="InterPro" id="IPR044599">
    <property type="entry name" value="CAF1P_plant"/>
</dbReference>
<dbReference type="InterPro" id="IPR001890">
    <property type="entry name" value="RNA-binding_CRM"/>
</dbReference>
<dbReference type="InterPro" id="IPR035920">
    <property type="entry name" value="YhbY-like_sf"/>
</dbReference>
<dbReference type="PANTHER" id="PTHR46247">
    <property type="entry name" value="CRS2-ASSOCIATED FACTOR 1, CHLOROPLASTIC"/>
    <property type="match status" value="1"/>
</dbReference>
<dbReference type="PANTHER" id="PTHR46247:SF3">
    <property type="entry name" value="CRS2-ASSOCIATED FACTOR 2, CHLOROPLASTIC"/>
    <property type="match status" value="1"/>
</dbReference>
<dbReference type="Pfam" id="PF01985">
    <property type="entry name" value="CRS1_YhbY"/>
    <property type="match status" value="2"/>
</dbReference>
<dbReference type="SMART" id="SM01103">
    <property type="entry name" value="CRS1_YhbY"/>
    <property type="match status" value="2"/>
</dbReference>
<dbReference type="SUPFAM" id="SSF75471">
    <property type="entry name" value="YhbY-like"/>
    <property type="match status" value="2"/>
</dbReference>
<dbReference type="PROSITE" id="PS51295">
    <property type="entry name" value="CRM"/>
    <property type="match status" value="2"/>
</dbReference>
<feature type="transit peptide" description="Chloroplast" evidence="2">
    <location>
        <begin position="1"/>
        <end position="79"/>
    </location>
</feature>
<feature type="chain" id="PRO_0000283621" description="CRS2-associated factor 2, chloroplastic">
    <location>
        <begin position="80"/>
        <end position="607"/>
    </location>
</feature>
<feature type="domain" description="CRM 1" evidence="3">
    <location>
        <begin position="228"/>
        <end position="324"/>
    </location>
</feature>
<feature type="domain" description="CRM 2" evidence="3">
    <location>
        <begin position="346"/>
        <end position="442"/>
    </location>
</feature>
<feature type="region of interest" description="Disordered" evidence="4">
    <location>
        <begin position="1"/>
        <end position="75"/>
    </location>
</feature>
<feature type="region of interest" description="CRS2 binding" evidence="1">
    <location>
        <begin position="482"/>
        <end position="505"/>
    </location>
</feature>
<feature type="region of interest" description="Disordered" evidence="4">
    <location>
        <begin position="550"/>
        <end position="576"/>
    </location>
</feature>
<gene>
    <name type="ordered locus">Os01g0323300</name>
    <name type="ordered locus">LOC_Os01g21990</name>
    <name type="ORF">OSJNBa0011P19.4</name>
    <name type="ORF">P0426D06.47</name>
</gene>
<sequence length="607" mass="67876">MSPPPPQRPSPSRAGRANLFSSPPPPLPNCYDPKHRRPAPPPLPSARRLPSNRRRRHDQPPNPTTGNGGNPAFRAPHLRTAYRKPVPPVAAAGEGEALLAADASDAADGRAVVVGPSGLSFRLPGAPFDFRFSYSECPRAPPVAIREPAFLPFAPPTMPRPWTGKAPLLTKEEKARRRGVRLHTPLGEEAPRTVSAHGIMMEVRGRRKLDLARVSPGDGRSREEVLGEPLTAAEVRDLVKPHISHNRQLNIGRDGLTHNMLEMIHCHWRRQEICKVRCRGVPTVDMKNLCYHLEEKSGGKVIHRVGGVVFLYRGRNYNPRTRPRYPLMLWKPATPVYPKLIQEAPEGLTKEEADEMRRRGKDLLPICKLAKNGIYIYLVRDVRDAFEGSDLVKIDCEGLNPSDYKKIGAKLRDLVPCVLLSFDNEQILMFRGKEWKSRYPKPLTLIPKIRKNNVPMSSDESSSDEATDDDDRLAVREVLRPKMFELWTNAIESSVALMLDDAEVDALTPDSLLTRVEDFSVTSQVVEHSFPAVLVANDESNPDVLNAEYTEDEPETGTLEPQQHEFTESSDVAEDDHFEDDMLKRLESSVPLGALPIDAVVKQLNDE</sequence>
<comment type="function">
    <text evidence="1">Required for the splicing of group IIB introns in chloroplasts. Forms splicing particles with CRS2. Interacts with RNA and confers intron specificity of the splicing particles (By similarity).</text>
</comment>
<comment type="subunit">
    <text evidence="1">Interacts with CRS2 and RNA. Part of large ribonucleo-protein complexes that include group IIB introns, CRS2 and CAF2 (By similarity).</text>
</comment>
<comment type="subcellular location">
    <subcellularLocation>
        <location evidence="1">Plastid</location>
        <location evidence="1">Chloroplast stroma</location>
    </subcellularLocation>
</comment>
<proteinExistence type="inferred from homology"/>